<name>RL24_SYNAS</name>
<evidence type="ECO:0000255" key="1">
    <source>
        <dbReference type="HAMAP-Rule" id="MF_01326"/>
    </source>
</evidence>
<evidence type="ECO:0000305" key="2"/>
<feature type="chain" id="PRO_0000241677" description="Large ribosomal subunit protein uL24">
    <location>
        <begin position="1"/>
        <end position="106"/>
    </location>
</feature>
<reference key="1">
    <citation type="journal article" date="2007" name="Proc. Natl. Acad. Sci. U.S.A.">
        <title>The genome of Syntrophus aciditrophicus: life at the thermodynamic limit of microbial growth.</title>
        <authorList>
            <person name="McInerney M.J."/>
            <person name="Rohlin L."/>
            <person name="Mouttaki H."/>
            <person name="Kim U."/>
            <person name="Krupp R.S."/>
            <person name="Rios-Hernandez L."/>
            <person name="Sieber J."/>
            <person name="Struchtemeyer C.G."/>
            <person name="Bhattacharyya A."/>
            <person name="Campbell J.W."/>
            <person name="Gunsalus R.P."/>
        </authorList>
    </citation>
    <scope>NUCLEOTIDE SEQUENCE [LARGE SCALE GENOMIC DNA]</scope>
    <source>
        <strain>SB</strain>
    </source>
</reference>
<organism>
    <name type="scientific">Syntrophus aciditrophicus (strain SB)</name>
    <dbReference type="NCBI Taxonomy" id="56780"/>
    <lineage>
        <taxon>Bacteria</taxon>
        <taxon>Pseudomonadati</taxon>
        <taxon>Thermodesulfobacteriota</taxon>
        <taxon>Syntrophia</taxon>
        <taxon>Syntrophales</taxon>
        <taxon>Syntrophaceae</taxon>
        <taxon>Syntrophus</taxon>
    </lineage>
</organism>
<dbReference type="EMBL" id="CP000252">
    <property type="protein sequence ID" value="ABC76192.1"/>
    <property type="molecule type" value="Genomic_DNA"/>
</dbReference>
<dbReference type="RefSeq" id="WP_011416226.1">
    <property type="nucleotide sequence ID" value="NC_007759.1"/>
</dbReference>
<dbReference type="SMR" id="Q2LQA9"/>
<dbReference type="FunCoup" id="Q2LQA9">
    <property type="interactions" value="570"/>
</dbReference>
<dbReference type="STRING" id="56780.SYN_03313"/>
<dbReference type="KEGG" id="sat:SYN_03313"/>
<dbReference type="eggNOG" id="COG0198">
    <property type="taxonomic scope" value="Bacteria"/>
</dbReference>
<dbReference type="HOGENOM" id="CLU_093315_2_3_7"/>
<dbReference type="InParanoid" id="Q2LQA9"/>
<dbReference type="OrthoDB" id="9807419at2"/>
<dbReference type="Proteomes" id="UP000001933">
    <property type="component" value="Chromosome"/>
</dbReference>
<dbReference type="GO" id="GO:1990904">
    <property type="term" value="C:ribonucleoprotein complex"/>
    <property type="evidence" value="ECO:0007669"/>
    <property type="project" value="UniProtKB-KW"/>
</dbReference>
<dbReference type="GO" id="GO:0005840">
    <property type="term" value="C:ribosome"/>
    <property type="evidence" value="ECO:0007669"/>
    <property type="project" value="UniProtKB-KW"/>
</dbReference>
<dbReference type="GO" id="GO:0019843">
    <property type="term" value="F:rRNA binding"/>
    <property type="evidence" value="ECO:0007669"/>
    <property type="project" value="UniProtKB-UniRule"/>
</dbReference>
<dbReference type="GO" id="GO:0003735">
    <property type="term" value="F:structural constituent of ribosome"/>
    <property type="evidence" value="ECO:0007669"/>
    <property type="project" value="InterPro"/>
</dbReference>
<dbReference type="GO" id="GO:0006412">
    <property type="term" value="P:translation"/>
    <property type="evidence" value="ECO:0007669"/>
    <property type="project" value="UniProtKB-UniRule"/>
</dbReference>
<dbReference type="CDD" id="cd06089">
    <property type="entry name" value="KOW_RPL26"/>
    <property type="match status" value="1"/>
</dbReference>
<dbReference type="FunFam" id="2.30.30.30:FF:000004">
    <property type="entry name" value="50S ribosomal protein L24"/>
    <property type="match status" value="1"/>
</dbReference>
<dbReference type="Gene3D" id="2.30.30.30">
    <property type="match status" value="1"/>
</dbReference>
<dbReference type="HAMAP" id="MF_01326_B">
    <property type="entry name" value="Ribosomal_uL24_B"/>
    <property type="match status" value="1"/>
</dbReference>
<dbReference type="InterPro" id="IPR005824">
    <property type="entry name" value="KOW"/>
</dbReference>
<dbReference type="InterPro" id="IPR014722">
    <property type="entry name" value="Rib_uL2_dom2"/>
</dbReference>
<dbReference type="InterPro" id="IPR003256">
    <property type="entry name" value="Ribosomal_uL24"/>
</dbReference>
<dbReference type="InterPro" id="IPR005825">
    <property type="entry name" value="Ribosomal_uL24_CS"/>
</dbReference>
<dbReference type="InterPro" id="IPR041988">
    <property type="entry name" value="Ribosomal_uL24_KOW"/>
</dbReference>
<dbReference type="InterPro" id="IPR008991">
    <property type="entry name" value="Translation_prot_SH3-like_sf"/>
</dbReference>
<dbReference type="NCBIfam" id="TIGR01079">
    <property type="entry name" value="rplX_bact"/>
    <property type="match status" value="1"/>
</dbReference>
<dbReference type="PANTHER" id="PTHR12903">
    <property type="entry name" value="MITOCHONDRIAL RIBOSOMAL PROTEIN L24"/>
    <property type="match status" value="1"/>
</dbReference>
<dbReference type="Pfam" id="PF00467">
    <property type="entry name" value="KOW"/>
    <property type="match status" value="1"/>
</dbReference>
<dbReference type="Pfam" id="PF17136">
    <property type="entry name" value="ribosomal_L24"/>
    <property type="match status" value="1"/>
</dbReference>
<dbReference type="SMART" id="SM00739">
    <property type="entry name" value="KOW"/>
    <property type="match status" value="1"/>
</dbReference>
<dbReference type="SUPFAM" id="SSF50104">
    <property type="entry name" value="Translation proteins SH3-like domain"/>
    <property type="match status" value="1"/>
</dbReference>
<dbReference type="PROSITE" id="PS01108">
    <property type="entry name" value="RIBOSOMAL_L24"/>
    <property type="match status" value="1"/>
</dbReference>
<gene>
    <name evidence="1" type="primary">rplX</name>
    <name type="ordered locus">SYNAS_03130</name>
    <name type="ORF">SYN_03313</name>
</gene>
<accession>Q2LQA9</accession>
<keyword id="KW-1185">Reference proteome</keyword>
<keyword id="KW-0687">Ribonucleoprotein</keyword>
<keyword id="KW-0689">Ribosomal protein</keyword>
<keyword id="KW-0694">RNA-binding</keyword>
<keyword id="KW-0699">rRNA-binding</keyword>
<sequence>MQLKHLKKGDFVKVISGREKGKTGKVLTVISEKNRVVIEKMNMVKRHQKANAMGKGGIVEKEGPIHASNVMMMCGKCNKETRVGIKKLEDGKKVRICKKCNDILDI</sequence>
<comment type="function">
    <text evidence="1">One of two assembly initiator proteins, it binds directly to the 5'-end of the 23S rRNA, where it nucleates assembly of the 50S subunit.</text>
</comment>
<comment type="function">
    <text evidence="1">One of the proteins that surrounds the polypeptide exit tunnel on the outside of the subunit.</text>
</comment>
<comment type="subunit">
    <text evidence="1">Part of the 50S ribosomal subunit.</text>
</comment>
<comment type="similarity">
    <text evidence="1">Belongs to the universal ribosomal protein uL24 family.</text>
</comment>
<protein>
    <recommendedName>
        <fullName evidence="1">Large ribosomal subunit protein uL24</fullName>
    </recommendedName>
    <alternativeName>
        <fullName evidence="2">50S ribosomal protein L24</fullName>
    </alternativeName>
</protein>
<proteinExistence type="inferred from homology"/>